<accession>P35516</accession>
<evidence type="ECO:0000303" key="1">
    <source>
    </source>
</evidence>
<evidence type="ECO:0000303" key="2">
    <source>
    </source>
</evidence>
<evidence type="ECO:0000305" key="3"/>
<evidence type="ECO:0000305" key="4">
    <source>
    </source>
</evidence>
<sequence length="622" mass="72513">MRYLGNKTNLLNFIQQVIKKHDIQGQTFADLFAGTGSVGDYFKGEYTVLSNDYMYFSKVISEAKLLNSEKPKFDSFVKRYGKTPFQWLNEREYTPNDGYFVYNNYTPRAERMYLTEENALKIDGMRLDIEELFQEGVISKAEYSYLLASLLESVTKVSNTSGTYQAFFKFWESRALKKFTIMPLEMKDSLSVSKDNRCFNKNTNRLVREISGDIAYIDPPYTITQYTNSYHVLETIARYDNPELFGKTGRRVKREFSGYSNKSKAYYEFEDLFRQINFTHVLVSYSNQSIVPLDELVDLARRFAVDGIVEVETNEYREYSTNNSSMKGEGKKLQEVIIYFKKNLETNKSPLNYAGSKDDVIPRIFKLLPKHVTTFVDAMGGAFNVGANRTALNKVVYNEYHPFVFEMMQMIVNTPADELIRNVEQIVTRYSLEKKGKEAFNRLRDHYNNEEQTPINLYTLNIYSFQNILRFNQAKKYNTPIGNNEFNEGYKDRITRFVTRAPEVEMRLGSYSAINFNEYDDDTVFYFDPPYLVTTAGYNDGKRGFDGWDAEQEASLLKYLTELDSAGKKFMLSNVLEHKGKTNHLLMEWIQHHGFNVNTIGETGIKYPRREILVTNYNTFER</sequence>
<geneLocation type="plasmid">
    <name>pTR2030</name>
</geneLocation>
<name>MTL1_LACLL</name>
<protein>
    <recommendedName>
        <fullName>Modification methylase LlaI</fullName>
        <shortName evidence="1">M.LlaI</shortName>
        <ecNumber>2.1.1.72</ecNumber>
    </recommendedName>
    <alternativeName>
        <fullName>Adenine-specific methyltransferase LlaI</fullName>
    </alternativeName>
    <alternativeName>
        <fullName evidence="1">Type II methyltransferase M.LlaI</fullName>
    </alternativeName>
</protein>
<keyword id="KW-0238">DNA-binding</keyword>
<keyword id="KW-0489">Methyltransferase</keyword>
<keyword id="KW-0614">Plasmid</keyword>
<keyword id="KW-0677">Repeat</keyword>
<keyword id="KW-0680">Restriction system</keyword>
<keyword id="KW-0949">S-adenosyl-L-methionine</keyword>
<keyword id="KW-0808">Transferase</keyword>
<reference key="1">
    <citation type="journal article" date="1991" name="J. Bacteriol.">
        <title>In vivo genetic exchange of a functional domain from a type II A methylase between lactococcal plasmid pTR2030 and a virulent bacteriophage.</title>
        <authorList>
            <person name="Hill C."/>
            <person name="Miller L.A."/>
            <person name="Klaenhammer T.R."/>
        </authorList>
    </citation>
    <scope>NUCLEOTIDE SEQUENCE [GENOMIC DNA]</scope>
    <scope>FUNCTION</scope>
    <source>
        <strain>ME2</strain>
    </source>
</reference>
<reference key="2">
    <citation type="journal article" date="2003" name="Nucleic Acids Res.">
        <title>A nomenclature for restriction enzymes, DNA methyltransferases, homing endonucleases and their genes.</title>
        <authorList>
            <person name="Roberts R.J."/>
            <person name="Belfort M."/>
            <person name="Bestor T."/>
            <person name="Bhagwat A.S."/>
            <person name="Bickle T.A."/>
            <person name="Bitinaite J."/>
            <person name="Blumenthal R.M."/>
            <person name="Degtyarev S.K."/>
            <person name="Dryden D.T."/>
            <person name="Dybvig K."/>
            <person name="Firman K."/>
            <person name="Gromova E.S."/>
            <person name="Gumport R.I."/>
            <person name="Halford S.E."/>
            <person name="Hattman S."/>
            <person name="Heitman J."/>
            <person name="Hornby D.P."/>
            <person name="Janulaitis A."/>
            <person name="Jeltsch A."/>
            <person name="Josephsen J."/>
            <person name="Kiss A."/>
            <person name="Klaenhammer T.R."/>
            <person name="Kobayashi I."/>
            <person name="Kong H."/>
            <person name="Krueger D.H."/>
            <person name="Lacks S."/>
            <person name="Marinus M.G."/>
            <person name="Miyahara M."/>
            <person name="Morgan R.D."/>
            <person name="Murray N.E."/>
            <person name="Nagaraja V."/>
            <person name="Piekarowicz A."/>
            <person name="Pingoud A."/>
            <person name="Raleigh E."/>
            <person name="Rao D.N."/>
            <person name="Reich N."/>
            <person name="Repin V.E."/>
            <person name="Selker E.U."/>
            <person name="Shaw P.C."/>
            <person name="Stein D.C."/>
            <person name="Stoddard B.L."/>
            <person name="Szybalski W."/>
            <person name="Trautner T.A."/>
            <person name="Van Etten J.L."/>
            <person name="Vitor J.M."/>
            <person name="Wilson G.G."/>
            <person name="Xu S.Y."/>
        </authorList>
    </citation>
    <scope>NOMENCLATURE</scope>
    <scope>SUBTYPE</scope>
</reference>
<feature type="chain" id="PRO_0000087961" description="Modification methylase LlaI">
    <location>
        <begin position="1"/>
        <end position="622"/>
    </location>
</feature>
<gene>
    <name evidence="2" type="primary">llaIM</name>
</gene>
<proteinExistence type="inferred from homology"/>
<dbReference type="EC" id="2.1.1.72"/>
<dbReference type="EMBL" id="U17233">
    <property type="protein sequence ID" value="AAA65073.1"/>
    <property type="molecule type" value="Genomic_DNA"/>
</dbReference>
<dbReference type="PIR" id="S35122">
    <property type="entry name" value="S35122"/>
</dbReference>
<dbReference type="SMR" id="P35516"/>
<dbReference type="REBASE" id="3437">
    <property type="entry name" value="M.LlaI"/>
</dbReference>
<dbReference type="PRO" id="PR:P35516"/>
<dbReference type="GO" id="GO:1904047">
    <property type="term" value="F:S-adenosyl-L-methionine binding"/>
    <property type="evidence" value="ECO:0007669"/>
    <property type="project" value="TreeGrafter"/>
</dbReference>
<dbReference type="GO" id="GO:0043565">
    <property type="term" value="F:sequence-specific DNA binding"/>
    <property type="evidence" value="ECO:0007669"/>
    <property type="project" value="TreeGrafter"/>
</dbReference>
<dbReference type="GO" id="GO:0009007">
    <property type="term" value="F:site-specific DNA-methyltransferase (adenine-specific) activity"/>
    <property type="evidence" value="ECO:0007669"/>
    <property type="project" value="UniProtKB-EC"/>
</dbReference>
<dbReference type="GO" id="GO:0009307">
    <property type="term" value="P:DNA restriction-modification system"/>
    <property type="evidence" value="ECO:0007669"/>
    <property type="project" value="UniProtKB-KW"/>
</dbReference>
<dbReference type="GO" id="GO:0032259">
    <property type="term" value="P:methylation"/>
    <property type="evidence" value="ECO:0007669"/>
    <property type="project" value="UniProtKB-KW"/>
</dbReference>
<dbReference type="GO" id="GO:0006298">
    <property type="term" value="P:mismatch repair"/>
    <property type="evidence" value="ECO:0007669"/>
    <property type="project" value="TreeGrafter"/>
</dbReference>
<dbReference type="Gene3D" id="1.10.1020.10">
    <property type="entry name" value="Adenine-specific Methyltransferase, Domain 2"/>
    <property type="match status" value="1"/>
</dbReference>
<dbReference type="Gene3D" id="3.40.50.150">
    <property type="entry name" value="Vaccinia Virus protein VP39"/>
    <property type="match status" value="2"/>
</dbReference>
<dbReference type="InterPro" id="IPR012186">
    <property type="entry name" value="Ade-mod_methylase_MStsI"/>
</dbReference>
<dbReference type="InterPro" id="IPR023095">
    <property type="entry name" value="Ade_MeTrfase_dom_2"/>
</dbReference>
<dbReference type="InterPro" id="IPR002052">
    <property type="entry name" value="DNA_methylase_N6_adenine_CS"/>
</dbReference>
<dbReference type="InterPro" id="IPR012327">
    <property type="entry name" value="MeTrfase_D12"/>
</dbReference>
<dbReference type="InterPro" id="IPR029063">
    <property type="entry name" value="SAM-dependent_MTases_sf"/>
</dbReference>
<dbReference type="NCBIfam" id="TIGR00571">
    <property type="entry name" value="dam"/>
    <property type="match status" value="1"/>
</dbReference>
<dbReference type="PANTHER" id="PTHR30481">
    <property type="entry name" value="DNA ADENINE METHYLASE"/>
    <property type="match status" value="1"/>
</dbReference>
<dbReference type="Pfam" id="PF02086">
    <property type="entry name" value="MethyltransfD12"/>
    <property type="match status" value="2"/>
</dbReference>
<dbReference type="PIRSF" id="PIRSF036638">
    <property type="entry name" value="M_m6A_StsI"/>
    <property type="match status" value="1"/>
</dbReference>
<dbReference type="PRINTS" id="PR00505">
    <property type="entry name" value="D12N6MTFRASE"/>
</dbReference>
<dbReference type="SUPFAM" id="SSF53335">
    <property type="entry name" value="S-adenosyl-L-methionine-dependent methyltransferases"/>
    <property type="match status" value="2"/>
</dbReference>
<dbReference type="PROSITE" id="PS00092">
    <property type="entry name" value="N6_MTASE"/>
    <property type="match status" value="1"/>
</dbReference>
<organism>
    <name type="scientific">Lactococcus lactis subsp. lactis</name>
    <name type="common">Streptococcus lactis</name>
    <dbReference type="NCBI Taxonomy" id="1360"/>
    <lineage>
        <taxon>Bacteria</taxon>
        <taxon>Bacillati</taxon>
        <taxon>Bacillota</taxon>
        <taxon>Bacilli</taxon>
        <taxon>Lactobacillales</taxon>
        <taxon>Streptococcaceae</taxon>
        <taxon>Lactococcus</taxon>
    </lineage>
</organism>
<comment type="function">
    <text evidence="1 4">An alpha subtype methylase that modifies unknown specific adenine residues, and protects the DNA from cleavage by the LlaI endonuclease.</text>
</comment>
<comment type="catalytic activity">
    <reaction>
        <text>a 2'-deoxyadenosine in DNA + S-adenosyl-L-methionine = an N(6)-methyl-2'-deoxyadenosine in DNA + S-adenosyl-L-homocysteine + H(+)</text>
        <dbReference type="Rhea" id="RHEA:15197"/>
        <dbReference type="Rhea" id="RHEA-COMP:12418"/>
        <dbReference type="Rhea" id="RHEA-COMP:12419"/>
        <dbReference type="ChEBI" id="CHEBI:15378"/>
        <dbReference type="ChEBI" id="CHEBI:57856"/>
        <dbReference type="ChEBI" id="CHEBI:59789"/>
        <dbReference type="ChEBI" id="CHEBI:90615"/>
        <dbReference type="ChEBI" id="CHEBI:90616"/>
        <dbReference type="EC" id="2.1.1.72"/>
    </reaction>
</comment>
<comment type="similarity">
    <text evidence="3">Belongs to the N(4)/N(6)-methyltransferase family.</text>
</comment>